<feature type="chain" id="PRO_0000104338" description="Large ribosomal subunit protein uL11">
    <location>
        <begin position="1"/>
        <end position="143"/>
    </location>
</feature>
<accession>Q6A6K2</accession>
<keyword id="KW-0488">Methylation</keyword>
<keyword id="KW-0687">Ribonucleoprotein</keyword>
<keyword id="KW-0689">Ribosomal protein</keyword>
<keyword id="KW-0694">RNA-binding</keyword>
<keyword id="KW-0699">rRNA-binding</keyword>
<dbReference type="EMBL" id="AE017283">
    <property type="protein sequence ID" value="AAT83611.1"/>
    <property type="molecule type" value="Genomic_DNA"/>
</dbReference>
<dbReference type="RefSeq" id="WP_002516066.1">
    <property type="nucleotide sequence ID" value="NZ_CP025935.1"/>
</dbReference>
<dbReference type="SMR" id="Q6A6K2"/>
<dbReference type="EnsemblBacteria" id="AAT83611">
    <property type="protein sequence ID" value="AAT83611"/>
    <property type="gene ID" value="PPA1890"/>
</dbReference>
<dbReference type="GeneID" id="92857831"/>
<dbReference type="KEGG" id="pac:PPA1890"/>
<dbReference type="eggNOG" id="COG0080">
    <property type="taxonomic scope" value="Bacteria"/>
</dbReference>
<dbReference type="HOGENOM" id="CLU_074237_2_0_11"/>
<dbReference type="Proteomes" id="UP000000603">
    <property type="component" value="Chromosome"/>
</dbReference>
<dbReference type="GO" id="GO:0022625">
    <property type="term" value="C:cytosolic large ribosomal subunit"/>
    <property type="evidence" value="ECO:0007669"/>
    <property type="project" value="TreeGrafter"/>
</dbReference>
<dbReference type="GO" id="GO:0070180">
    <property type="term" value="F:large ribosomal subunit rRNA binding"/>
    <property type="evidence" value="ECO:0007669"/>
    <property type="project" value="UniProtKB-UniRule"/>
</dbReference>
<dbReference type="GO" id="GO:0003735">
    <property type="term" value="F:structural constituent of ribosome"/>
    <property type="evidence" value="ECO:0007669"/>
    <property type="project" value="InterPro"/>
</dbReference>
<dbReference type="GO" id="GO:0006412">
    <property type="term" value="P:translation"/>
    <property type="evidence" value="ECO:0007669"/>
    <property type="project" value="UniProtKB-UniRule"/>
</dbReference>
<dbReference type="CDD" id="cd00349">
    <property type="entry name" value="Ribosomal_L11"/>
    <property type="match status" value="1"/>
</dbReference>
<dbReference type="FunFam" id="1.10.10.250:FF:000001">
    <property type="entry name" value="50S ribosomal protein L11"/>
    <property type="match status" value="1"/>
</dbReference>
<dbReference type="FunFam" id="3.30.1550.10:FF:000005">
    <property type="entry name" value="50S ribosomal protein L11"/>
    <property type="match status" value="1"/>
</dbReference>
<dbReference type="Gene3D" id="1.10.10.250">
    <property type="entry name" value="Ribosomal protein L11, C-terminal domain"/>
    <property type="match status" value="1"/>
</dbReference>
<dbReference type="Gene3D" id="3.30.1550.10">
    <property type="entry name" value="Ribosomal protein L11/L12, N-terminal domain"/>
    <property type="match status" value="1"/>
</dbReference>
<dbReference type="HAMAP" id="MF_00736">
    <property type="entry name" value="Ribosomal_uL11"/>
    <property type="match status" value="1"/>
</dbReference>
<dbReference type="InterPro" id="IPR000911">
    <property type="entry name" value="Ribosomal_uL11"/>
</dbReference>
<dbReference type="InterPro" id="IPR006519">
    <property type="entry name" value="Ribosomal_uL11_bac-typ"/>
</dbReference>
<dbReference type="InterPro" id="IPR020783">
    <property type="entry name" value="Ribosomal_uL11_C"/>
</dbReference>
<dbReference type="InterPro" id="IPR036769">
    <property type="entry name" value="Ribosomal_uL11_C_sf"/>
</dbReference>
<dbReference type="InterPro" id="IPR020785">
    <property type="entry name" value="Ribosomal_uL11_CS"/>
</dbReference>
<dbReference type="InterPro" id="IPR020784">
    <property type="entry name" value="Ribosomal_uL11_N"/>
</dbReference>
<dbReference type="InterPro" id="IPR036796">
    <property type="entry name" value="Ribosomal_uL11_N_sf"/>
</dbReference>
<dbReference type="NCBIfam" id="TIGR01632">
    <property type="entry name" value="L11_bact"/>
    <property type="match status" value="1"/>
</dbReference>
<dbReference type="PANTHER" id="PTHR11661">
    <property type="entry name" value="60S RIBOSOMAL PROTEIN L12"/>
    <property type="match status" value="1"/>
</dbReference>
<dbReference type="PANTHER" id="PTHR11661:SF1">
    <property type="entry name" value="LARGE RIBOSOMAL SUBUNIT PROTEIN UL11M"/>
    <property type="match status" value="1"/>
</dbReference>
<dbReference type="Pfam" id="PF00298">
    <property type="entry name" value="Ribosomal_L11"/>
    <property type="match status" value="1"/>
</dbReference>
<dbReference type="Pfam" id="PF03946">
    <property type="entry name" value="Ribosomal_L11_N"/>
    <property type="match status" value="1"/>
</dbReference>
<dbReference type="SMART" id="SM00649">
    <property type="entry name" value="RL11"/>
    <property type="match status" value="1"/>
</dbReference>
<dbReference type="SUPFAM" id="SSF54747">
    <property type="entry name" value="Ribosomal L11/L12e N-terminal domain"/>
    <property type="match status" value="1"/>
</dbReference>
<dbReference type="SUPFAM" id="SSF46906">
    <property type="entry name" value="Ribosomal protein L11, C-terminal domain"/>
    <property type="match status" value="1"/>
</dbReference>
<dbReference type="PROSITE" id="PS00359">
    <property type="entry name" value="RIBOSOMAL_L11"/>
    <property type="match status" value="1"/>
</dbReference>
<reference key="1">
    <citation type="journal article" date="2004" name="Science">
        <title>The complete genome sequence of Propionibacterium acnes, a commensal of human skin.</title>
        <authorList>
            <person name="Brueggemann H."/>
            <person name="Henne A."/>
            <person name="Hoster F."/>
            <person name="Liesegang H."/>
            <person name="Wiezer A."/>
            <person name="Strittmatter A."/>
            <person name="Hujer S."/>
            <person name="Duerre P."/>
            <person name="Gottschalk G."/>
        </authorList>
    </citation>
    <scope>NUCLEOTIDE SEQUENCE [LARGE SCALE GENOMIC DNA]</scope>
    <source>
        <strain>DSM 16379 / KPA171202</strain>
    </source>
</reference>
<gene>
    <name evidence="1" type="primary">rplK</name>
    <name type="ordered locus">PPA1890</name>
</gene>
<name>RL11_CUTAK</name>
<proteinExistence type="inferred from homology"/>
<sequence>MPAKKKVAAVVKVAPQAGQATPAPPVGMALGPHGVNIMEFCKAYNAQTEGQRGNIVPVEITIYEDRTFSFVLKTPPAAELIKKAAGIKKGTENPATHKVGKISKDQVREIAETKMPDLNANDIEAAMKIVAGTARSMGVEVEV</sequence>
<organism>
    <name type="scientific">Cutibacterium acnes (strain DSM 16379 / KPA171202)</name>
    <name type="common">Propionibacterium acnes</name>
    <dbReference type="NCBI Taxonomy" id="267747"/>
    <lineage>
        <taxon>Bacteria</taxon>
        <taxon>Bacillati</taxon>
        <taxon>Actinomycetota</taxon>
        <taxon>Actinomycetes</taxon>
        <taxon>Propionibacteriales</taxon>
        <taxon>Propionibacteriaceae</taxon>
        <taxon>Cutibacterium</taxon>
    </lineage>
</organism>
<evidence type="ECO:0000255" key="1">
    <source>
        <dbReference type="HAMAP-Rule" id="MF_00736"/>
    </source>
</evidence>
<evidence type="ECO:0000305" key="2"/>
<protein>
    <recommendedName>
        <fullName evidence="1">Large ribosomal subunit protein uL11</fullName>
    </recommendedName>
    <alternativeName>
        <fullName evidence="2">50S ribosomal protein L11</fullName>
    </alternativeName>
</protein>
<comment type="function">
    <text evidence="1">Forms part of the ribosomal stalk which helps the ribosome interact with GTP-bound translation factors.</text>
</comment>
<comment type="subunit">
    <text evidence="1">Part of the ribosomal stalk of the 50S ribosomal subunit. Interacts with L10 and the large rRNA to form the base of the stalk. L10 forms an elongated spine to which L12 dimers bind in a sequential fashion forming a multimeric L10(L12)X complex.</text>
</comment>
<comment type="PTM">
    <text evidence="1">One or more lysine residues are methylated.</text>
</comment>
<comment type="similarity">
    <text evidence="1">Belongs to the universal ribosomal protein uL11 family.</text>
</comment>